<comment type="function">
    <text evidence="1">Binds directly to 23S rRNA. The L1 stalk is quite mobile in the ribosome, and is involved in E site tRNA release.</text>
</comment>
<comment type="function">
    <text evidence="1">Protein L1 is also a translational repressor protein, it controls the translation of the L11 operon by binding to its mRNA.</text>
</comment>
<comment type="subunit">
    <text evidence="1">Part of the 50S ribosomal subunit.</text>
</comment>
<comment type="similarity">
    <text evidence="1">Belongs to the universal ribosomal protein uL1 family.</text>
</comment>
<reference key="1">
    <citation type="journal article" date="2006" name="BMC Genomics">
        <title>Complete genome sequence of Shigella flexneri 5b and comparison with Shigella flexneri 2a.</title>
        <authorList>
            <person name="Nie H."/>
            <person name="Yang F."/>
            <person name="Zhang X."/>
            <person name="Yang J."/>
            <person name="Chen L."/>
            <person name="Wang J."/>
            <person name="Xiong Z."/>
            <person name="Peng J."/>
            <person name="Sun L."/>
            <person name="Dong J."/>
            <person name="Xue Y."/>
            <person name="Xu X."/>
            <person name="Chen S."/>
            <person name="Yao Z."/>
            <person name="Shen Y."/>
            <person name="Jin Q."/>
        </authorList>
    </citation>
    <scope>NUCLEOTIDE SEQUENCE [LARGE SCALE GENOMIC DNA]</scope>
    <source>
        <strain>8401</strain>
    </source>
</reference>
<feature type="chain" id="PRO_0000308106" description="Large ribosomal subunit protein uL1">
    <location>
        <begin position="1"/>
        <end position="234"/>
    </location>
</feature>
<gene>
    <name evidence="1" type="primary">rplA</name>
    <name type="ordered locus">SFV_4056</name>
</gene>
<evidence type="ECO:0000255" key="1">
    <source>
        <dbReference type="HAMAP-Rule" id="MF_01318"/>
    </source>
</evidence>
<evidence type="ECO:0000305" key="2"/>
<name>RL1_SHIF8</name>
<keyword id="KW-0678">Repressor</keyword>
<keyword id="KW-0687">Ribonucleoprotein</keyword>
<keyword id="KW-0689">Ribosomal protein</keyword>
<keyword id="KW-0694">RNA-binding</keyword>
<keyword id="KW-0699">rRNA-binding</keyword>
<keyword id="KW-0810">Translation regulation</keyword>
<keyword id="KW-0820">tRNA-binding</keyword>
<proteinExistence type="inferred from homology"/>
<organism>
    <name type="scientific">Shigella flexneri serotype 5b (strain 8401)</name>
    <dbReference type="NCBI Taxonomy" id="373384"/>
    <lineage>
        <taxon>Bacteria</taxon>
        <taxon>Pseudomonadati</taxon>
        <taxon>Pseudomonadota</taxon>
        <taxon>Gammaproteobacteria</taxon>
        <taxon>Enterobacterales</taxon>
        <taxon>Enterobacteriaceae</taxon>
        <taxon>Shigella</taxon>
    </lineage>
</organism>
<accession>Q0SY16</accession>
<dbReference type="EMBL" id="CP000266">
    <property type="protein sequence ID" value="ABF06049.1"/>
    <property type="molecule type" value="Genomic_DNA"/>
</dbReference>
<dbReference type="RefSeq" id="WP_001096684.1">
    <property type="nucleotide sequence ID" value="NC_008258.1"/>
</dbReference>
<dbReference type="SMR" id="Q0SY16"/>
<dbReference type="GeneID" id="93777910"/>
<dbReference type="KEGG" id="sfv:SFV_4056"/>
<dbReference type="HOGENOM" id="CLU_062853_0_0_6"/>
<dbReference type="Proteomes" id="UP000000659">
    <property type="component" value="Chromosome"/>
</dbReference>
<dbReference type="GO" id="GO:0022625">
    <property type="term" value="C:cytosolic large ribosomal subunit"/>
    <property type="evidence" value="ECO:0007669"/>
    <property type="project" value="TreeGrafter"/>
</dbReference>
<dbReference type="GO" id="GO:0019843">
    <property type="term" value="F:rRNA binding"/>
    <property type="evidence" value="ECO:0007669"/>
    <property type="project" value="UniProtKB-UniRule"/>
</dbReference>
<dbReference type="GO" id="GO:0003735">
    <property type="term" value="F:structural constituent of ribosome"/>
    <property type="evidence" value="ECO:0007669"/>
    <property type="project" value="InterPro"/>
</dbReference>
<dbReference type="GO" id="GO:0000049">
    <property type="term" value="F:tRNA binding"/>
    <property type="evidence" value="ECO:0007669"/>
    <property type="project" value="UniProtKB-KW"/>
</dbReference>
<dbReference type="GO" id="GO:0006417">
    <property type="term" value="P:regulation of translation"/>
    <property type="evidence" value="ECO:0007669"/>
    <property type="project" value="UniProtKB-KW"/>
</dbReference>
<dbReference type="GO" id="GO:0006412">
    <property type="term" value="P:translation"/>
    <property type="evidence" value="ECO:0007669"/>
    <property type="project" value="UniProtKB-UniRule"/>
</dbReference>
<dbReference type="CDD" id="cd00403">
    <property type="entry name" value="Ribosomal_L1"/>
    <property type="match status" value="1"/>
</dbReference>
<dbReference type="FunFam" id="3.40.50.790:FF:000001">
    <property type="entry name" value="50S ribosomal protein L1"/>
    <property type="match status" value="1"/>
</dbReference>
<dbReference type="Gene3D" id="3.30.190.20">
    <property type="match status" value="1"/>
</dbReference>
<dbReference type="Gene3D" id="3.40.50.790">
    <property type="match status" value="1"/>
</dbReference>
<dbReference type="HAMAP" id="MF_01318_B">
    <property type="entry name" value="Ribosomal_uL1_B"/>
    <property type="match status" value="1"/>
</dbReference>
<dbReference type="InterPro" id="IPR005878">
    <property type="entry name" value="Ribosom_uL1_bac-type"/>
</dbReference>
<dbReference type="InterPro" id="IPR002143">
    <property type="entry name" value="Ribosomal_uL1"/>
</dbReference>
<dbReference type="InterPro" id="IPR023674">
    <property type="entry name" value="Ribosomal_uL1-like"/>
</dbReference>
<dbReference type="InterPro" id="IPR028364">
    <property type="entry name" value="Ribosomal_uL1/biogenesis"/>
</dbReference>
<dbReference type="InterPro" id="IPR016095">
    <property type="entry name" value="Ribosomal_uL1_3-a/b-sand"/>
</dbReference>
<dbReference type="InterPro" id="IPR023673">
    <property type="entry name" value="Ribosomal_uL1_CS"/>
</dbReference>
<dbReference type="NCBIfam" id="TIGR01169">
    <property type="entry name" value="rplA_bact"/>
    <property type="match status" value="1"/>
</dbReference>
<dbReference type="PANTHER" id="PTHR36427">
    <property type="entry name" value="54S RIBOSOMAL PROTEIN L1, MITOCHONDRIAL"/>
    <property type="match status" value="1"/>
</dbReference>
<dbReference type="PANTHER" id="PTHR36427:SF3">
    <property type="entry name" value="LARGE RIBOSOMAL SUBUNIT PROTEIN UL1M"/>
    <property type="match status" value="1"/>
</dbReference>
<dbReference type="Pfam" id="PF00687">
    <property type="entry name" value="Ribosomal_L1"/>
    <property type="match status" value="1"/>
</dbReference>
<dbReference type="PIRSF" id="PIRSF002155">
    <property type="entry name" value="Ribosomal_L1"/>
    <property type="match status" value="1"/>
</dbReference>
<dbReference type="SUPFAM" id="SSF56808">
    <property type="entry name" value="Ribosomal protein L1"/>
    <property type="match status" value="1"/>
</dbReference>
<dbReference type="PROSITE" id="PS01199">
    <property type="entry name" value="RIBOSOMAL_L1"/>
    <property type="match status" value="1"/>
</dbReference>
<protein>
    <recommendedName>
        <fullName evidence="1">Large ribosomal subunit protein uL1</fullName>
    </recommendedName>
    <alternativeName>
        <fullName evidence="2">50S ribosomal protein L1</fullName>
    </alternativeName>
</protein>
<sequence length="234" mass="24730">MAKLTKRMRVIREKVDATKQYDINEAIALLKELATAKFVESVDVAVNLGIDARKSDQNVRGATVLPHGTGRSVRVAVFTQGANAEAAKAAGAELVGMEDLADQIKKGEMNFDVVIASPDAMRVVGQLGQVLGPRGLMPNPKVGTVTPNVAEAVKNAKAGQVRYRNDKNGIIHTTIGKVDFDADKLKENLEALLVALKKAKPTQAKGVYIKKVSISTTMGAGVAVDQAGLSASVN</sequence>